<evidence type="ECO:0000255" key="1">
    <source>
        <dbReference type="HAMAP-Rule" id="MF_00303"/>
    </source>
</evidence>
<protein>
    <recommendedName>
        <fullName evidence="1">Trigger factor</fullName>
        <shortName evidence="1">TF</shortName>
        <ecNumber evidence="1">5.2.1.8</ecNumber>
    </recommendedName>
    <alternativeName>
        <fullName evidence="1">PPIase</fullName>
    </alternativeName>
</protein>
<accession>A3DJ09</accession>
<proteinExistence type="inferred from homology"/>
<reference key="1">
    <citation type="submission" date="2007-02" db="EMBL/GenBank/DDBJ databases">
        <title>Complete sequence of Clostridium thermocellum ATCC 27405.</title>
        <authorList>
            <consortium name="US DOE Joint Genome Institute"/>
            <person name="Copeland A."/>
            <person name="Lucas S."/>
            <person name="Lapidus A."/>
            <person name="Barry K."/>
            <person name="Detter J.C."/>
            <person name="Glavina del Rio T."/>
            <person name="Hammon N."/>
            <person name="Israni S."/>
            <person name="Dalin E."/>
            <person name="Tice H."/>
            <person name="Pitluck S."/>
            <person name="Chertkov O."/>
            <person name="Brettin T."/>
            <person name="Bruce D."/>
            <person name="Han C."/>
            <person name="Tapia R."/>
            <person name="Gilna P."/>
            <person name="Schmutz J."/>
            <person name="Larimer F."/>
            <person name="Land M."/>
            <person name="Hauser L."/>
            <person name="Kyrpides N."/>
            <person name="Mikhailova N."/>
            <person name="Wu J.H.D."/>
            <person name="Newcomb M."/>
            <person name="Richardson P."/>
        </authorList>
    </citation>
    <scope>NUCLEOTIDE SEQUENCE [LARGE SCALE GENOMIC DNA]</scope>
    <source>
        <strain>ATCC 27405 / DSM 1237 / JCM 9322 / NBRC 103400 / NCIMB 10682 / NRRL B-4536 / VPI 7372</strain>
    </source>
</reference>
<comment type="function">
    <text evidence="1">Involved in protein export. Acts as a chaperone by maintaining the newly synthesized protein in an open conformation. Functions as a peptidyl-prolyl cis-trans isomerase.</text>
</comment>
<comment type="catalytic activity">
    <reaction evidence="1">
        <text>[protein]-peptidylproline (omega=180) = [protein]-peptidylproline (omega=0)</text>
        <dbReference type="Rhea" id="RHEA:16237"/>
        <dbReference type="Rhea" id="RHEA-COMP:10747"/>
        <dbReference type="Rhea" id="RHEA-COMP:10748"/>
        <dbReference type="ChEBI" id="CHEBI:83833"/>
        <dbReference type="ChEBI" id="CHEBI:83834"/>
        <dbReference type="EC" id="5.2.1.8"/>
    </reaction>
</comment>
<comment type="subcellular location">
    <subcellularLocation>
        <location>Cytoplasm</location>
    </subcellularLocation>
    <text evidence="1">About half TF is bound to the ribosome near the polypeptide exit tunnel while the other half is free in the cytoplasm.</text>
</comment>
<comment type="domain">
    <text evidence="1">Consists of 3 domains; the N-terminus binds the ribosome, the middle domain has PPIase activity, while the C-terminus has intrinsic chaperone activity on its own.</text>
</comment>
<comment type="similarity">
    <text evidence="1">Belongs to the FKBP-type PPIase family. Tig subfamily.</text>
</comment>
<sequence length="428" mass="48843">MVVKVEKKDKNIVELEIEVEAAKFEEAVQKSYLKNSKKFTVPGFRKGKAPRSIIERYYGKEVFYEDAINIVCADAYDKAIEENDIFPVDRPTISIKKIGEGENLVFTASVTVKPEVELGEYKGVEVEKVEVNVTDEDVEKELKAVAEKNARIMSVEDRGIQKGDIVDIDFEGFIDGEPFEGGKASGYVLEVGSGTFIDGFEDQLIGGRPGDDIEVNVTFPEDYGKKELAGKPALFKVIVNDVKVKELPAIDDEFAKDVSEFDTLEEYKESIRKKLTEAAEHRAKHELEDKVVAKVVENAQVDIPDVMIERQIDSMVRDYNMRLNYQGLDLDKYLMIMGIDYQTFRNQLRDRAHDDIKRQLVLEKVAKVEDIKVSDEEINEEAEKIAKSYNMEHEDFKKHLRDDDIEYIKATILFKKAVDFLVQNAKIL</sequence>
<name>TIG_ACET2</name>
<organism>
    <name type="scientific">Acetivibrio thermocellus (strain ATCC 27405 / DSM 1237 / JCM 9322 / NBRC 103400 / NCIMB 10682 / NRRL B-4536 / VPI 7372)</name>
    <name type="common">Clostridium thermocellum</name>
    <dbReference type="NCBI Taxonomy" id="203119"/>
    <lineage>
        <taxon>Bacteria</taxon>
        <taxon>Bacillati</taxon>
        <taxon>Bacillota</taxon>
        <taxon>Clostridia</taxon>
        <taxon>Eubacteriales</taxon>
        <taxon>Oscillospiraceae</taxon>
        <taxon>Acetivibrio</taxon>
    </lineage>
</organism>
<feature type="chain" id="PRO_1000022672" description="Trigger factor">
    <location>
        <begin position="1"/>
        <end position="428"/>
    </location>
</feature>
<feature type="domain" description="PPIase FKBP-type" evidence="1">
    <location>
        <begin position="163"/>
        <end position="248"/>
    </location>
</feature>
<dbReference type="EC" id="5.2.1.8" evidence="1"/>
<dbReference type="EMBL" id="CP000568">
    <property type="protein sequence ID" value="ABN53938.1"/>
    <property type="molecule type" value="Genomic_DNA"/>
</dbReference>
<dbReference type="RefSeq" id="WP_003514322.1">
    <property type="nucleotide sequence ID" value="NC_009012.1"/>
</dbReference>
<dbReference type="SMR" id="A3DJ09"/>
<dbReference type="STRING" id="203119.Cthe_2739"/>
<dbReference type="GeneID" id="35804178"/>
<dbReference type="KEGG" id="cth:Cthe_2739"/>
<dbReference type="eggNOG" id="COG0544">
    <property type="taxonomic scope" value="Bacteria"/>
</dbReference>
<dbReference type="HOGENOM" id="CLU_033058_3_2_9"/>
<dbReference type="OrthoDB" id="9767721at2"/>
<dbReference type="Proteomes" id="UP000002145">
    <property type="component" value="Chromosome"/>
</dbReference>
<dbReference type="GO" id="GO:0005737">
    <property type="term" value="C:cytoplasm"/>
    <property type="evidence" value="ECO:0007669"/>
    <property type="project" value="UniProtKB-SubCell"/>
</dbReference>
<dbReference type="GO" id="GO:0003755">
    <property type="term" value="F:peptidyl-prolyl cis-trans isomerase activity"/>
    <property type="evidence" value="ECO:0007669"/>
    <property type="project" value="UniProtKB-UniRule"/>
</dbReference>
<dbReference type="GO" id="GO:0044183">
    <property type="term" value="F:protein folding chaperone"/>
    <property type="evidence" value="ECO:0007669"/>
    <property type="project" value="TreeGrafter"/>
</dbReference>
<dbReference type="GO" id="GO:0043022">
    <property type="term" value="F:ribosome binding"/>
    <property type="evidence" value="ECO:0007669"/>
    <property type="project" value="TreeGrafter"/>
</dbReference>
<dbReference type="GO" id="GO:0051083">
    <property type="term" value="P:'de novo' cotranslational protein folding"/>
    <property type="evidence" value="ECO:0007669"/>
    <property type="project" value="TreeGrafter"/>
</dbReference>
<dbReference type="GO" id="GO:0051301">
    <property type="term" value="P:cell division"/>
    <property type="evidence" value="ECO:0007669"/>
    <property type="project" value="UniProtKB-KW"/>
</dbReference>
<dbReference type="GO" id="GO:0061077">
    <property type="term" value="P:chaperone-mediated protein folding"/>
    <property type="evidence" value="ECO:0007669"/>
    <property type="project" value="TreeGrafter"/>
</dbReference>
<dbReference type="GO" id="GO:0015031">
    <property type="term" value="P:protein transport"/>
    <property type="evidence" value="ECO:0007669"/>
    <property type="project" value="UniProtKB-UniRule"/>
</dbReference>
<dbReference type="GO" id="GO:0043335">
    <property type="term" value="P:protein unfolding"/>
    <property type="evidence" value="ECO:0007669"/>
    <property type="project" value="TreeGrafter"/>
</dbReference>
<dbReference type="FunFam" id="3.10.50.40:FF:000001">
    <property type="entry name" value="Trigger factor"/>
    <property type="match status" value="1"/>
</dbReference>
<dbReference type="Gene3D" id="3.10.50.40">
    <property type="match status" value="1"/>
</dbReference>
<dbReference type="Gene3D" id="3.30.70.1050">
    <property type="entry name" value="Trigger factor ribosome-binding domain"/>
    <property type="match status" value="1"/>
</dbReference>
<dbReference type="Gene3D" id="1.10.3120.10">
    <property type="entry name" value="Trigger factor, C-terminal domain"/>
    <property type="match status" value="1"/>
</dbReference>
<dbReference type="HAMAP" id="MF_00303">
    <property type="entry name" value="Trigger_factor_Tig"/>
    <property type="match status" value="1"/>
</dbReference>
<dbReference type="InterPro" id="IPR046357">
    <property type="entry name" value="PPIase_dom_sf"/>
</dbReference>
<dbReference type="InterPro" id="IPR001179">
    <property type="entry name" value="PPIase_FKBP_dom"/>
</dbReference>
<dbReference type="InterPro" id="IPR005215">
    <property type="entry name" value="Trig_fac"/>
</dbReference>
<dbReference type="InterPro" id="IPR008880">
    <property type="entry name" value="Trigger_fac_C"/>
</dbReference>
<dbReference type="InterPro" id="IPR037041">
    <property type="entry name" value="Trigger_fac_C_sf"/>
</dbReference>
<dbReference type="InterPro" id="IPR008881">
    <property type="entry name" value="Trigger_fac_ribosome-bd_bac"/>
</dbReference>
<dbReference type="InterPro" id="IPR036611">
    <property type="entry name" value="Trigger_fac_ribosome-bd_sf"/>
</dbReference>
<dbReference type="InterPro" id="IPR027304">
    <property type="entry name" value="Trigger_fact/SurA_dom_sf"/>
</dbReference>
<dbReference type="NCBIfam" id="TIGR00115">
    <property type="entry name" value="tig"/>
    <property type="match status" value="1"/>
</dbReference>
<dbReference type="PANTHER" id="PTHR30560">
    <property type="entry name" value="TRIGGER FACTOR CHAPERONE AND PEPTIDYL-PROLYL CIS/TRANS ISOMERASE"/>
    <property type="match status" value="1"/>
</dbReference>
<dbReference type="PANTHER" id="PTHR30560:SF3">
    <property type="entry name" value="TRIGGER FACTOR-LIKE PROTEIN TIG, CHLOROPLASTIC"/>
    <property type="match status" value="1"/>
</dbReference>
<dbReference type="Pfam" id="PF00254">
    <property type="entry name" value="FKBP_C"/>
    <property type="match status" value="1"/>
</dbReference>
<dbReference type="Pfam" id="PF05698">
    <property type="entry name" value="Trigger_C"/>
    <property type="match status" value="1"/>
</dbReference>
<dbReference type="Pfam" id="PF05697">
    <property type="entry name" value="Trigger_N"/>
    <property type="match status" value="1"/>
</dbReference>
<dbReference type="PIRSF" id="PIRSF003095">
    <property type="entry name" value="Trigger_factor"/>
    <property type="match status" value="1"/>
</dbReference>
<dbReference type="SUPFAM" id="SSF54534">
    <property type="entry name" value="FKBP-like"/>
    <property type="match status" value="1"/>
</dbReference>
<dbReference type="SUPFAM" id="SSF109998">
    <property type="entry name" value="Triger factor/SurA peptide-binding domain-like"/>
    <property type="match status" value="1"/>
</dbReference>
<dbReference type="SUPFAM" id="SSF102735">
    <property type="entry name" value="Trigger factor ribosome-binding domain"/>
    <property type="match status" value="1"/>
</dbReference>
<dbReference type="PROSITE" id="PS50059">
    <property type="entry name" value="FKBP_PPIASE"/>
    <property type="match status" value="1"/>
</dbReference>
<keyword id="KW-0131">Cell cycle</keyword>
<keyword id="KW-0132">Cell division</keyword>
<keyword id="KW-0143">Chaperone</keyword>
<keyword id="KW-0963">Cytoplasm</keyword>
<keyword id="KW-0413">Isomerase</keyword>
<keyword id="KW-1185">Reference proteome</keyword>
<keyword id="KW-0697">Rotamase</keyword>
<gene>
    <name evidence="1" type="primary">tig</name>
    <name type="ordered locus">Cthe_2739</name>
</gene>